<feature type="signal peptide" evidence="3 4">
    <location>
        <begin position="1"/>
        <end position="20"/>
    </location>
</feature>
<feature type="chain" id="PRO_0000398806" description="Endo-beta-1,6-galactanase" evidence="3 4">
    <location>
        <begin position="21"/>
        <end position="479"/>
    </location>
</feature>
<feature type="active site" description="Proton donor" evidence="1">
    <location>
        <position position="210"/>
    </location>
</feature>
<feature type="active site" description="Nucleophile" evidence="1">
    <location>
        <position position="311"/>
    </location>
</feature>
<feature type="glycosylation site" description="N-linked (GlcNAc...) asparagine" evidence="2">
    <location>
        <position position="89"/>
    </location>
</feature>
<feature type="glycosylation site" description="N-linked (GlcNAc...) asparagine" evidence="2">
    <location>
        <position position="271"/>
    </location>
</feature>
<feature type="glycosylation site" description="N-linked (GlcNAc...) asparagine" evidence="2">
    <location>
        <position position="358"/>
    </location>
</feature>
<feature type="sequence conflict" description="In Ref. 2; AA sequence." evidence="5" ref="2">
    <original>T</original>
    <variation>S</variation>
    <location>
        <position position="25"/>
    </location>
</feature>
<reference evidence="5 6" key="1">
    <citation type="journal article" date="2004" name="Biochem. J.">
        <title>Molecular cloning and expression in Escherichia coli of a Trichoderma viride endo-beta-(1--&gt;6)-galactanase gene.</title>
        <authorList>
            <person name="Kotake T."/>
            <person name="Kaneko S."/>
            <person name="Kubomoto A."/>
            <person name="Haque M.A."/>
            <person name="Kobayashi H."/>
            <person name="Tsumuraya Y."/>
        </authorList>
    </citation>
    <scope>NUCLEOTIDE SEQUENCE [MRNA]</scope>
    <scope>PROTEIN SEQUENCE OF 21-55</scope>
    <scope>FUNCTION</scope>
    <scope>CATALYTIC ACTIVITY</scope>
    <scope>MASS SPECTROMETRY</scope>
    <source>
        <strain evidence="4">NBRC 31137</strain>
        <tissue evidence="4">Conidium</tissue>
    </source>
</reference>
<reference evidence="5" key="2">
    <citation type="journal article" date="2003" name="Carbohydr. Res.">
        <title>Purification and characterization of an endo-beta-(1--&gt;6)-galactanase from Trichoderma viride.</title>
        <authorList>
            <person name="Okemoto K."/>
            <person name="Uekita T."/>
            <person name="Tsumuraya Y."/>
            <person name="Hashimoto Y."/>
            <person name="Kasama T."/>
        </authorList>
    </citation>
    <scope>PROTEIN SEQUENCE OF 21-31</scope>
    <scope>FUNCTION</scope>
    <scope>CATALYTIC ACTIVITY</scope>
    <scope>BIOPHYSICOCHEMICAL PROPERTIES</scope>
</reference>
<proteinExistence type="evidence at protein level"/>
<comment type="function">
    <text evidence="3 4">Hydrolyzes galactooligomers with a degree of polymerization higher than 3. Hydrolyzes radish root arabinogalactan-protein. Does not hydrolyze dextran, arabinan, starch, laminarin, beta-1,4- and beta-1,3-galactans, larch wood arabinogalactan or acid-insoluble polygalacturonic acid.</text>
</comment>
<comment type="catalytic activity">
    <reaction evidence="3 4">
        <text>Endohydrolysis of (1-&gt;6)-beta-D-galactosidic linkages in arabinogalactan proteins and (1-&gt;3):(1-&gt;6)-beta-galactans to yield galactose and beta-(1-&gt;6)-galactaobiose as the final products.</text>
        <dbReference type="EC" id="3.2.1.164"/>
    </reaction>
</comment>
<comment type="biophysicochemical properties">
    <phDependence>
        <text evidence="3">Optimum pH is 4.3. Stable between pH 3.0 and 11.0 in the presence of BSA, and pH 4.0 and 9.5 in the absence of BSA.</text>
    </phDependence>
    <temperatureDependence>
        <text evidence="3">Loses 30% of activity after 10 minutes incubation at 50 degrees Celsius, activity is abolished after 10 minutes incubation at 60 degrees Celsius.</text>
    </temperatureDependence>
</comment>
<comment type="mass spectrometry"/>
<comment type="similarity">
    <text evidence="5">Belongs to the glycosyl hydrolase 5 (cellulase A) family.</text>
</comment>
<organism>
    <name type="scientific">Hypocrea rufa</name>
    <name type="common">Trichoderma viride</name>
    <dbReference type="NCBI Taxonomy" id="5547"/>
    <lineage>
        <taxon>Eukaryota</taxon>
        <taxon>Fungi</taxon>
        <taxon>Dikarya</taxon>
        <taxon>Ascomycota</taxon>
        <taxon>Pezizomycotina</taxon>
        <taxon>Sordariomycetes</taxon>
        <taxon>Hypocreomycetidae</taxon>
        <taxon>Hypocreales</taxon>
        <taxon>Hypocreaceae</taxon>
        <taxon>Trichoderma</taxon>
    </lineage>
</organism>
<sequence>MRSIVLPSLALALFSQRARADTTLTIDPTSNWGTWEGWGVSLAWWAKAFGNRDDLASVFFSRNNQAVNGQTLPGLGFNIVRYNAGACSNNSYDGSTMVVSPNIKPSRQMDGFWLDWASSDPSSSSWNWNVDANQRAMLQKAKANGANIFELFSNSPMWWMCNNHNPSGSGSSDNLQSWNYQNHAVYLADIAQHAQQSWRIQFQSVEAFNEPSSSWWTAEGTQEGCHFDVSTMATVIGYLNTELSSRGLSSFVASSDENTYDLAISTWQGFNSSTRNIVKRINVHGYQDGGGRRDTLYSLASQAGKRLWNSEYGDSDASGKSMYQNLLLDFTWLHPTAWVYWQAIDGAGWGLIVGDNDNLTLSSASTKYFVLAQLTRHIRQGMQILTTPDVNTAVAYDAGSQKLVIVTANWGSAQTITFDLTRARTAGSNGATVPRWSTQTGGGDQYRSYTDTKINNGKFSASFSSGQVQTFEVSGVVLQ</sequence>
<dbReference type="EC" id="3.2.1.164"/>
<dbReference type="EMBL" id="AB104898">
    <property type="protein sequence ID" value="BAC84995.1"/>
    <property type="molecule type" value="mRNA"/>
</dbReference>
<dbReference type="SMR" id="Q76FP5"/>
<dbReference type="CAZy" id="GH30">
    <property type="family name" value="Glycoside Hydrolase Family 30"/>
</dbReference>
<dbReference type="GlyCosmos" id="Q76FP5">
    <property type="glycosylation" value="3 sites, No reported glycans"/>
</dbReference>
<dbReference type="KEGG" id="ag:BAC84995"/>
<dbReference type="BioCyc" id="MetaCyc:MONOMER-20546"/>
<dbReference type="BRENDA" id="3.2.1.164">
    <property type="organism ID" value="6447"/>
</dbReference>
<dbReference type="GO" id="GO:0004553">
    <property type="term" value="F:hydrolase activity, hydrolyzing O-glycosyl compounds"/>
    <property type="evidence" value="ECO:0000314"/>
    <property type="project" value="UniProtKB"/>
</dbReference>
<dbReference type="GO" id="GO:0000272">
    <property type="term" value="P:polysaccharide catabolic process"/>
    <property type="evidence" value="ECO:0000314"/>
    <property type="project" value="UniProtKB"/>
</dbReference>
<dbReference type="Gene3D" id="3.20.20.80">
    <property type="entry name" value="Glycosidases"/>
    <property type="match status" value="1"/>
</dbReference>
<dbReference type="Gene3D" id="2.60.40.1180">
    <property type="entry name" value="Golgi alpha-mannosidase II"/>
    <property type="match status" value="1"/>
</dbReference>
<dbReference type="InterPro" id="IPR039514">
    <property type="entry name" value="6GAL-like"/>
</dbReference>
<dbReference type="InterPro" id="IPR039743">
    <property type="entry name" value="6GAL/EXGAL"/>
</dbReference>
<dbReference type="InterPro" id="IPR013780">
    <property type="entry name" value="Glyco_hydro_b"/>
</dbReference>
<dbReference type="InterPro" id="IPR017853">
    <property type="entry name" value="Glycoside_hydrolase_SF"/>
</dbReference>
<dbReference type="PANTHER" id="PTHR42767">
    <property type="entry name" value="ENDO-BETA-1,6-GALACTANASE"/>
    <property type="match status" value="1"/>
</dbReference>
<dbReference type="PANTHER" id="PTHR42767:SF1">
    <property type="entry name" value="ENDO-BETA-1,6-GALACTANASE-LIKE DOMAIN-CONTAINING PROTEIN"/>
    <property type="match status" value="1"/>
</dbReference>
<dbReference type="Pfam" id="PF14587">
    <property type="entry name" value="Glyco_hydr_30_2"/>
    <property type="match status" value="1"/>
</dbReference>
<dbReference type="SUPFAM" id="SSF51445">
    <property type="entry name" value="(Trans)glycosidases"/>
    <property type="match status" value="1"/>
</dbReference>
<protein>
    <recommendedName>
        <fullName evidence="6">Endo-beta-1,6-galactanase</fullName>
        <ecNumber>3.2.1.164</ecNumber>
    </recommendedName>
</protein>
<gene>
    <name evidence="6" type="primary">6GAL</name>
</gene>
<evidence type="ECO:0000250" key="1">
    <source>
        <dbReference type="UniProtKB" id="Q45070"/>
    </source>
</evidence>
<evidence type="ECO:0000255" key="2"/>
<evidence type="ECO:0000269" key="3">
    <source>
    </source>
</evidence>
<evidence type="ECO:0000269" key="4">
    <source>
    </source>
</evidence>
<evidence type="ECO:0000305" key="5"/>
<evidence type="ECO:0000312" key="6">
    <source>
        <dbReference type="EMBL" id="BAC84995.1"/>
    </source>
</evidence>
<keyword id="KW-0119">Carbohydrate metabolism</keyword>
<keyword id="KW-0903">Direct protein sequencing</keyword>
<keyword id="KW-0325">Glycoprotein</keyword>
<keyword id="KW-0326">Glycosidase</keyword>
<keyword id="KW-0378">Hydrolase</keyword>
<keyword id="KW-0624">Polysaccharide degradation</keyword>
<keyword id="KW-0732">Signal</keyword>
<accession>Q76FP5</accession>
<name>6GAL_HYPRU</name>